<feature type="chain" id="PRO_1000135095" description="1-(5-phosphoribosyl)-5-[(5-phosphoribosylamino)methylideneamino] imidazole-4-carboxamide isomerase">
    <location>
        <begin position="1"/>
        <end position="262"/>
    </location>
</feature>
<feature type="active site" description="Proton acceptor" evidence="1">
    <location>
        <position position="8"/>
    </location>
</feature>
<feature type="active site" description="Proton donor" evidence="1">
    <location>
        <position position="130"/>
    </location>
</feature>
<comment type="catalytic activity">
    <reaction evidence="1">
        <text>1-(5-phospho-beta-D-ribosyl)-5-[(5-phospho-beta-D-ribosylamino)methylideneamino]imidazole-4-carboxamide = 5-[(5-phospho-1-deoxy-D-ribulos-1-ylimino)methylamino]-1-(5-phospho-beta-D-ribosyl)imidazole-4-carboxamide</text>
        <dbReference type="Rhea" id="RHEA:15469"/>
        <dbReference type="ChEBI" id="CHEBI:58435"/>
        <dbReference type="ChEBI" id="CHEBI:58525"/>
        <dbReference type="EC" id="5.3.1.16"/>
    </reaction>
</comment>
<comment type="pathway">
    <text evidence="1">Amino-acid biosynthesis; L-histidine biosynthesis; L-histidine from 5-phospho-alpha-D-ribose 1-diphosphate: step 4/9.</text>
</comment>
<comment type="subcellular location">
    <subcellularLocation>
        <location evidence="1">Cytoplasm</location>
    </subcellularLocation>
</comment>
<comment type="similarity">
    <text evidence="1">Belongs to the HisA/HisF family.</text>
</comment>
<evidence type="ECO:0000255" key="1">
    <source>
        <dbReference type="HAMAP-Rule" id="MF_01014"/>
    </source>
</evidence>
<sequence>MLIIPAIDIKGGKCVRLTRGDFEQEKIYLDEPSDMAIIWRKQNAKLIHVVDLDAALTGKPENFDKIKQIVDTLDIPIEIGGGIRTAEDAARYLDIGVYRVVIGSAAVKNPSLVSQLIEKYGPRKIVVGIDAEDGIAKISGWTESSQKKDYELALEMKDRGVERIIYTDITRDGTLEGVGYETTKAFAEKAQMRITASGGVFGKQDLSKLCKLEHLGVDSVIIGKALYEERFPCQKLWHLFEESISLDTNFSTAEQKQNSVAG</sequence>
<proteinExistence type="inferred from homology"/>
<dbReference type="EC" id="5.3.1.16" evidence="1"/>
<dbReference type="EMBL" id="CP001100">
    <property type="protein sequence ID" value="ACF13864.1"/>
    <property type="molecule type" value="Genomic_DNA"/>
</dbReference>
<dbReference type="RefSeq" id="WP_012499948.1">
    <property type="nucleotide sequence ID" value="NC_011026.1"/>
</dbReference>
<dbReference type="SMR" id="B3QRR1"/>
<dbReference type="STRING" id="517418.Ctha_1401"/>
<dbReference type="KEGG" id="cts:Ctha_1401"/>
<dbReference type="eggNOG" id="COG0106">
    <property type="taxonomic scope" value="Bacteria"/>
</dbReference>
<dbReference type="HOGENOM" id="CLU_048577_1_1_10"/>
<dbReference type="OrthoDB" id="9807749at2"/>
<dbReference type="UniPathway" id="UPA00031">
    <property type="reaction ID" value="UER00009"/>
</dbReference>
<dbReference type="Proteomes" id="UP000001208">
    <property type="component" value="Chromosome"/>
</dbReference>
<dbReference type="GO" id="GO:0005737">
    <property type="term" value="C:cytoplasm"/>
    <property type="evidence" value="ECO:0007669"/>
    <property type="project" value="UniProtKB-SubCell"/>
</dbReference>
<dbReference type="GO" id="GO:0003949">
    <property type="term" value="F:1-(5-phosphoribosyl)-5-[(5-phosphoribosylamino)methylideneamino]imidazole-4-carboxamide isomerase activity"/>
    <property type="evidence" value="ECO:0007669"/>
    <property type="project" value="UniProtKB-UniRule"/>
</dbReference>
<dbReference type="GO" id="GO:0000105">
    <property type="term" value="P:L-histidine biosynthetic process"/>
    <property type="evidence" value="ECO:0007669"/>
    <property type="project" value="UniProtKB-UniRule"/>
</dbReference>
<dbReference type="GO" id="GO:0000162">
    <property type="term" value="P:L-tryptophan biosynthetic process"/>
    <property type="evidence" value="ECO:0007669"/>
    <property type="project" value="TreeGrafter"/>
</dbReference>
<dbReference type="CDD" id="cd04732">
    <property type="entry name" value="HisA"/>
    <property type="match status" value="1"/>
</dbReference>
<dbReference type="FunFam" id="3.20.20.70:FF:000009">
    <property type="entry name" value="1-(5-phosphoribosyl)-5-[(5-phosphoribosylamino)methylideneamino] imidazole-4-carboxamide isomerase"/>
    <property type="match status" value="1"/>
</dbReference>
<dbReference type="Gene3D" id="3.20.20.70">
    <property type="entry name" value="Aldolase class I"/>
    <property type="match status" value="1"/>
</dbReference>
<dbReference type="HAMAP" id="MF_01014">
    <property type="entry name" value="HisA"/>
    <property type="match status" value="1"/>
</dbReference>
<dbReference type="InterPro" id="IPR013785">
    <property type="entry name" value="Aldolase_TIM"/>
</dbReference>
<dbReference type="InterPro" id="IPR006062">
    <property type="entry name" value="His_biosynth"/>
</dbReference>
<dbReference type="InterPro" id="IPR006063">
    <property type="entry name" value="HisA_bact_arch"/>
</dbReference>
<dbReference type="InterPro" id="IPR044524">
    <property type="entry name" value="Isoase_HisA-like"/>
</dbReference>
<dbReference type="InterPro" id="IPR023016">
    <property type="entry name" value="Isoase_HisA-like_bact"/>
</dbReference>
<dbReference type="InterPro" id="IPR011060">
    <property type="entry name" value="RibuloseP-bd_barrel"/>
</dbReference>
<dbReference type="NCBIfam" id="TIGR00007">
    <property type="entry name" value="1-(5-phosphoribosyl)-5-[(5-phosphoribosylamino)methylideneamino]imidazole-4-carboxamide isomerase"/>
    <property type="match status" value="1"/>
</dbReference>
<dbReference type="PANTHER" id="PTHR43090">
    <property type="entry name" value="1-(5-PHOSPHORIBOSYL)-5-[(5-PHOSPHORIBOSYLAMINO)METHYLIDENEAMINO] IMIDAZOLE-4-CARBOXAMIDE ISOMERASE"/>
    <property type="match status" value="1"/>
</dbReference>
<dbReference type="PANTHER" id="PTHR43090:SF2">
    <property type="entry name" value="1-(5-PHOSPHORIBOSYL)-5-[(5-PHOSPHORIBOSYLAMINO)METHYLIDENEAMINO] IMIDAZOLE-4-CARBOXAMIDE ISOMERASE"/>
    <property type="match status" value="1"/>
</dbReference>
<dbReference type="Pfam" id="PF00977">
    <property type="entry name" value="His_biosynth"/>
    <property type="match status" value="1"/>
</dbReference>
<dbReference type="SUPFAM" id="SSF51366">
    <property type="entry name" value="Ribulose-phoshate binding barrel"/>
    <property type="match status" value="1"/>
</dbReference>
<reference key="1">
    <citation type="submission" date="2008-06" db="EMBL/GenBank/DDBJ databases">
        <title>Complete sequence of Chloroherpeton thalassium ATCC 35110.</title>
        <authorList>
            <consortium name="US DOE Joint Genome Institute"/>
            <person name="Lucas S."/>
            <person name="Copeland A."/>
            <person name="Lapidus A."/>
            <person name="Glavina del Rio T."/>
            <person name="Dalin E."/>
            <person name="Tice H."/>
            <person name="Bruce D."/>
            <person name="Goodwin L."/>
            <person name="Pitluck S."/>
            <person name="Schmutz J."/>
            <person name="Larimer F."/>
            <person name="Land M."/>
            <person name="Hauser L."/>
            <person name="Kyrpides N."/>
            <person name="Mikhailova N."/>
            <person name="Liu Z."/>
            <person name="Li T."/>
            <person name="Zhao F."/>
            <person name="Overmann J."/>
            <person name="Bryant D.A."/>
            <person name="Richardson P."/>
        </authorList>
    </citation>
    <scope>NUCLEOTIDE SEQUENCE [LARGE SCALE GENOMIC DNA]</scope>
    <source>
        <strain>ATCC 35110 / GB-78</strain>
    </source>
</reference>
<gene>
    <name evidence="1" type="primary">hisA</name>
    <name type="ordered locus">Ctha_1401</name>
</gene>
<organism>
    <name type="scientific">Chloroherpeton thalassium (strain ATCC 35110 / GB-78)</name>
    <dbReference type="NCBI Taxonomy" id="517418"/>
    <lineage>
        <taxon>Bacteria</taxon>
        <taxon>Pseudomonadati</taxon>
        <taxon>Chlorobiota</taxon>
        <taxon>Chlorobiia</taxon>
        <taxon>Chlorobiales</taxon>
        <taxon>Chloroherpetonaceae</taxon>
        <taxon>Chloroherpeton</taxon>
    </lineage>
</organism>
<protein>
    <recommendedName>
        <fullName evidence="1">1-(5-phosphoribosyl)-5-[(5-phosphoribosylamino)methylideneamino] imidazole-4-carboxamide isomerase</fullName>
        <ecNumber evidence="1">5.3.1.16</ecNumber>
    </recommendedName>
    <alternativeName>
        <fullName evidence="1">Phosphoribosylformimino-5-aminoimidazole carboxamide ribotide isomerase</fullName>
    </alternativeName>
</protein>
<name>HIS4_CHLT3</name>
<accession>B3QRR1</accession>
<keyword id="KW-0028">Amino-acid biosynthesis</keyword>
<keyword id="KW-0963">Cytoplasm</keyword>
<keyword id="KW-0368">Histidine biosynthesis</keyword>
<keyword id="KW-0413">Isomerase</keyword>
<keyword id="KW-1185">Reference proteome</keyword>